<feature type="chain" id="PRO_0000395047" description="Cytokinin riboside 5'-monophosphate phosphoribohydrolase LOG4">
    <location>
        <begin position="1"/>
        <end position="215"/>
    </location>
</feature>
<feature type="binding site" evidence="1">
    <location>
        <position position="84"/>
    </location>
    <ligand>
        <name>substrate</name>
    </ligand>
</feature>
<feature type="binding site" evidence="1">
    <location>
        <begin position="102"/>
        <end position="103"/>
    </location>
    <ligand>
        <name>substrate</name>
    </ligand>
</feature>
<feature type="binding site" evidence="1">
    <location>
        <begin position="119"/>
        <end position="125"/>
    </location>
    <ligand>
        <name>substrate</name>
    </ligand>
</feature>
<feature type="binding site" evidence="1">
    <location>
        <position position="131"/>
    </location>
    <ligand>
        <name>substrate</name>
    </ligand>
</feature>
<comment type="function">
    <text evidence="2">Cytokinin-activating enzyme working in the direct activation pathway. Phosphoribohydrolase that converts inactive cytokinin nucleotides to the biologically active free-base forms.</text>
</comment>
<comment type="catalytic activity">
    <reaction evidence="2">
        <text>N(6)-(dimethylallyl)adenosine 5'-phosphate + H2O = N(6)-dimethylallyladenine + D-ribose 5-phosphate</text>
        <dbReference type="Rhea" id="RHEA:48560"/>
        <dbReference type="ChEBI" id="CHEBI:15377"/>
        <dbReference type="ChEBI" id="CHEBI:17660"/>
        <dbReference type="ChEBI" id="CHEBI:57526"/>
        <dbReference type="ChEBI" id="CHEBI:78346"/>
        <dbReference type="EC" id="3.2.2.n1"/>
    </reaction>
</comment>
<comment type="catalytic activity">
    <reaction evidence="2">
        <text>9-ribosyl-trans-zeatin 5'-phosphate + H2O = trans-zeatin + D-ribose 5-phosphate</text>
        <dbReference type="Rhea" id="RHEA:48564"/>
        <dbReference type="ChEBI" id="CHEBI:15377"/>
        <dbReference type="ChEBI" id="CHEBI:16522"/>
        <dbReference type="ChEBI" id="CHEBI:78346"/>
        <dbReference type="ChEBI" id="CHEBI:87947"/>
        <dbReference type="EC" id="3.2.2.n1"/>
    </reaction>
</comment>
<comment type="biophysicochemical properties">
    <kinetics>
        <KM evidence="2">8.6 uM for N(6)-(Delta(2)-isopentenyl)-adenosine 5'-phosphate</KM>
        <Vmax evidence="2">4.4 umol/min/mg enzyme with N(6)-(Delta(2)-isopentenyl)-adenosine 5'-phosphate as substrate</Vmax>
    </kinetics>
    <phDependence>
        <text evidence="2">Optimum pH is 6.5.</text>
    </phDependence>
</comment>
<comment type="subcellular location">
    <subcellularLocation>
        <location evidence="2">Cytoplasm</location>
    </subcellularLocation>
    <subcellularLocation>
        <location evidence="2">Nucleus</location>
    </subcellularLocation>
</comment>
<comment type="tissue specificity">
    <text evidence="2">Expressed in roots and shoots. Detected in root procambium, lateral root primordia, vascular tissues of cotyledons, leaves and stems, shoot apical meristem, axillary buds, young inflorescences, fruit abscission zones and basal part of ovules.</text>
</comment>
<comment type="disruption phenotype">
    <text evidence="2">No visible phenotype under normal growth conditions; due to the redundancy with other LOG proteins.</text>
</comment>
<comment type="similarity">
    <text evidence="3">Belongs to the LOG family.</text>
</comment>
<reference key="1">
    <citation type="journal article" date="2000" name="Nature">
        <title>Sequence and analysis of chromosome 3 of the plant Arabidopsis thaliana.</title>
        <authorList>
            <person name="Salanoubat M."/>
            <person name="Lemcke K."/>
            <person name="Rieger M."/>
            <person name="Ansorge W."/>
            <person name="Unseld M."/>
            <person name="Fartmann B."/>
            <person name="Valle G."/>
            <person name="Bloecker H."/>
            <person name="Perez-Alonso M."/>
            <person name="Obermaier B."/>
            <person name="Delseny M."/>
            <person name="Boutry M."/>
            <person name="Grivell L.A."/>
            <person name="Mache R."/>
            <person name="Puigdomenech P."/>
            <person name="De Simone V."/>
            <person name="Choisne N."/>
            <person name="Artiguenave F."/>
            <person name="Robert C."/>
            <person name="Brottier P."/>
            <person name="Wincker P."/>
            <person name="Cattolico L."/>
            <person name="Weissenbach J."/>
            <person name="Saurin W."/>
            <person name="Quetier F."/>
            <person name="Schaefer M."/>
            <person name="Mueller-Auer S."/>
            <person name="Gabel C."/>
            <person name="Fuchs M."/>
            <person name="Benes V."/>
            <person name="Wurmbach E."/>
            <person name="Drzonek H."/>
            <person name="Erfle H."/>
            <person name="Jordan N."/>
            <person name="Bangert S."/>
            <person name="Wiedelmann R."/>
            <person name="Kranz H."/>
            <person name="Voss H."/>
            <person name="Holland R."/>
            <person name="Brandt P."/>
            <person name="Nyakatura G."/>
            <person name="Vezzi A."/>
            <person name="D'Angelo M."/>
            <person name="Pallavicini A."/>
            <person name="Toppo S."/>
            <person name="Simionati B."/>
            <person name="Conrad A."/>
            <person name="Hornischer K."/>
            <person name="Kauer G."/>
            <person name="Loehnert T.-H."/>
            <person name="Nordsiek G."/>
            <person name="Reichelt J."/>
            <person name="Scharfe M."/>
            <person name="Schoen O."/>
            <person name="Bargues M."/>
            <person name="Terol J."/>
            <person name="Climent J."/>
            <person name="Navarro P."/>
            <person name="Collado C."/>
            <person name="Perez-Perez A."/>
            <person name="Ottenwaelder B."/>
            <person name="Duchemin D."/>
            <person name="Cooke R."/>
            <person name="Laudie M."/>
            <person name="Berger-Llauro C."/>
            <person name="Purnelle B."/>
            <person name="Masuy D."/>
            <person name="de Haan M."/>
            <person name="Maarse A.C."/>
            <person name="Alcaraz J.-P."/>
            <person name="Cottet A."/>
            <person name="Casacuberta E."/>
            <person name="Monfort A."/>
            <person name="Argiriou A."/>
            <person name="Flores M."/>
            <person name="Liguori R."/>
            <person name="Vitale D."/>
            <person name="Mannhaupt G."/>
            <person name="Haase D."/>
            <person name="Schoof H."/>
            <person name="Rudd S."/>
            <person name="Zaccaria P."/>
            <person name="Mewes H.-W."/>
            <person name="Mayer K.F.X."/>
            <person name="Kaul S."/>
            <person name="Town C.D."/>
            <person name="Koo H.L."/>
            <person name="Tallon L.J."/>
            <person name="Jenkins J."/>
            <person name="Rooney T."/>
            <person name="Rizzo M."/>
            <person name="Walts A."/>
            <person name="Utterback T."/>
            <person name="Fujii C.Y."/>
            <person name="Shea T.P."/>
            <person name="Creasy T.H."/>
            <person name="Haas B."/>
            <person name="Maiti R."/>
            <person name="Wu D."/>
            <person name="Peterson J."/>
            <person name="Van Aken S."/>
            <person name="Pai G."/>
            <person name="Militscher J."/>
            <person name="Sellers P."/>
            <person name="Gill J.E."/>
            <person name="Feldblyum T.V."/>
            <person name="Preuss D."/>
            <person name="Lin X."/>
            <person name="Nierman W.C."/>
            <person name="Salzberg S.L."/>
            <person name="White O."/>
            <person name="Venter J.C."/>
            <person name="Fraser C.M."/>
            <person name="Kaneko T."/>
            <person name="Nakamura Y."/>
            <person name="Sato S."/>
            <person name="Kato T."/>
            <person name="Asamizu E."/>
            <person name="Sasamoto S."/>
            <person name="Kimura T."/>
            <person name="Idesawa K."/>
            <person name="Kawashima K."/>
            <person name="Kishida Y."/>
            <person name="Kiyokawa C."/>
            <person name="Kohara M."/>
            <person name="Matsumoto M."/>
            <person name="Matsuno A."/>
            <person name="Muraki A."/>
            <person name="Nakayama S."/>
            <person name="Nakazaki N."/>
            <person name="Shinpo S."/>
            <person name="Takeuchi C."/>
            <person name="Wada T."/>
            <person name="Watanabe A."/>
            <person name="Yamada M."/>
            <person name="Yasuda M."/>
            <person name="Tabata S."/>
        </authorList>
    </citation>
    <scope>NUCLEOTIDE SEQUENCE [LARGE SCALE GENOMIC DNA]</scope>
    <source>
        <strain>cv. Columbia</strain>
    </source>
</reference>
<reference key="2">
    <citation type="journal article" date="2017" name="Plant J.">
        <title>Araport11: a complete reannotation of the Arabidopsis thaliana reference genome.</title>
        <authorList>
            <person name="Cheng C.Y."/>
            <person name="Krishnakumar V."/>
            <person name="Chan A.P."/>
            <person name="Thibaud-Nissen F."/>
            <person name="Schobel S."/>
            <person name="Town C.D."/>
        </authorList>
    </citation>
    <scope>GENOME REANNOTATION</scope>
    <source>
        <strain>cv. Columbia</strain>
    </source>
</reference>
<reference key="3">
    <citation type="journal article" date="2007" name="Nature">
        <title>Direct control of shoot meristem activity by a cytokinin-activating enzyme.</title>
        <authorList>
            <person name="Kurakawa T."/>
            <person name="Ueda N."/>
            <person name="Maekawa M."/>
            <person name="Kobayashi K."/>
            <person name="Kojima M."/>
            <person name="Nagato Y."/>
            <person name="Sakakibara H."/>
            <person name="Kyozuka J."/>
        </authorList>
    </citation>
    <scope>IDENTIFICATION</scope>
</reference>
<reference key="4">
    <citation type="journal article" date="2009" name="Plant Cell">
        <title>Functional analyses of LONELY GUY cytokinin-activating enzymes reveal the importance of the direct activation pathway in Arabidopsis.</title>
        <authorList>
            <person name="Kuroha T."/>
            <person name="Tokunaga H."/>
            <person name="Kojima M."/>
            <person name="Ueda N."/>
            <person name="Ishida T."/>
            <person name="Nagawa S."/>
            <person name="Fukuda H."/>
            <person name="Sugimoto K."/>
            <person name="Sakakibara H."/>
        </authorList>
    </citation>
    <scope>FUNCTION</scope>
    <scope>CATALYTIC ACTIVITY</scope>
    <scope>BIOPHYSICOCHEMICAL PROPERTIES</scope>
    <scope>DISRUPTION PHENOTYPE</scope>
    <scope>TISSUE SPECIFICITY</scope>
    <scope>SUBCELLULAR LOCATION</scope>
    <scope>GENE FAMILY</scope>
    <scope>NOMENCLATURE</scope>
</reference>
<gene>
    <name type="primary">LOG4</name>
    <name type="ordered locus">At3g53450</name>
    <name type="ORF">F4P12.150</name>
</gene>
<keyword id="KW-0203">Cytokinin biosynthesis</keyword>
<keyword id="KW-0963">Cytoplasm</keyword>
<keyword id="KW-0378">Hydrolase</keyword>
<keyword id="KW-0539">Nucleus</keyword>
<keyword id="KW-1185">Reference proteome</keyword>
<name>LOG4_ARATH</name>
<organism>
    <name type="scientific">Arabidopsis thaliana</name>
    <name type="common">Mouse-ear cress</name>
    <dbReference type="NCBI Taxonomy" id="3702"/>
    <lineage>
        <taxon>Eukaryota</taxon>
        <taxon>Viridiplantae</taxon>
        <taxon>Streptophyta</taxon>
        <taxon>Embryophyta</taxon>
        <taxon>Tracheophyta</taxon>
        <taxon>Spermatophyta</taxon>
        <taxon>Magnoliopsida</taxon>
        <taxon>eudicotyledons</taxon>
        <taxon>Gunneridae</taxon>
        <taxon>Pentapetalae</taxon>
        <taxon>rosids</taxon>
        <taxon>malvids</taxon>
        <taxon>Brassicales</taxon>
        <taxon>Brassicaceae</taxon>
        <taxon>Camelineae</taxon>
        <taxon>Arabidopsis</taxon>
    </lineage>
</organism>
<accession>Q9LFH3</accession>
<sequence>MEVNNETMQKSKFGRICVFCGSSQGKKSSYQDAAVDLGNELVLRNIDLVYGGGSIGLMGLVSQAVHDGGRHVIGVIPKTLMPRELTGETVGEVRAVADMHQRKAEMARHSDAFIALPGGYGTLEELLEVITWAQLGIHDKPVGLLNVDGYYNSLLSFIDKAVEEGFISTNARQIIISAPTAKELVKKLEEYSPCHESVATKLCWEIERIDYSSED</sequence>
<evidence type="ECO:0000250" key="1">
    <source>
        <dbReference type="UniProtKB" id="B2HS63"/>
    </source>
</evidence>
<evidence type="ECO:0000269" key="2">
    <source>
    </source>
</evidence>
<evidence type="ECO:0000305" key="3"/>
<protein>
    <recommendedName>
        <fullName>Cytokinin riboside 5'-monophosphate phosphoribohydrolase LOG4</fullName>
        <ecNumber>3.2.2.n1</ecNumber>
    </recommendedName>
    <alternativeName>
        <fullName>Protein LONELY GUY 4</fullName>
    </alternativeName>
</protein>
<dbReference type="EC" id="3.2.2.n1"/>
<dbReference type="EMBL" id="AL132966">
    <property type="protein sequence ID" value="CAB67652.1"/>
    <property type="molecule type" value="Genomic_DNA"/>
</dbReference>
<dbReference type="EMBL" id="CP002686">
    <property type="protein sequence ID" value="AEE79088.1"/>
    <property type="molecule type" value="Genomic_DNA"/>
</dbReference>
<dbReference type="PIR" id="T45885">
    <property type="entry name" value="T45885"/>
</dbReference>
<dbReference type="RefSeq" id="NP_190913.1">
    <property type="nucleotide sequence ID" value="NM_115205.2"/>
</dbReference>
<dbReference type="SMR" id="Q9LFH3"/>
<dbReference type="STRING" id="3702.Q9LFH3"/>
<dbReference type="PaxDb" id="3702-AT3G53450.1"/>
<dbReference type="ProteomicsDB" id="238792"/>
<dbReference type="DNASU" id="824513"/>
<dbReference type="EnsemblPlants" id="AT3G53450.1">
    <property type="protein sequence ID" value="AT3G53450.1"/>
    <property type="gene ID" value="AT3G53450"/>
</dbReference>
<dbReference type="GeneID" id="824513"/>
<dbReference type="Gramene" id="AT3G53450.1">
    <property type="protein sequence ID" value="AT3G53450.1"/>
    <property type="gene ID" value="AT3G53450"/>
</dbReference>
<dbReference type="KEGG" id="ath:AT3G53450"/>
<dbReference type="Araport" id="AT3G53450"/>
<dbReference type="TAIR" id="AT3G53450">
    <property type="gene designation" value="LOG4"/>
</dbReference>
<dbReference type="eggNOG" id="ENOG502QSR9">
    <property type="taxonomic scope" value="Eukaryota"/>
</dbReference>
<dbReference type="HOGENOM" id="CLU_058336_2_0_1"/>
<dbReference type="InParanoid" id="Q9LFH3"/>
<dbReference type="OMA" id="WEIERID"/>
<dbReference type="OrthoDB" id="414463at2759"/>
<dbReference type="PhylomeDB" id="Q9LFH3"/>
<dbReference type="PRO" id="PR:Q9LFH3"/>
<dbReference type="Proteomes" id="UP000006548">
    <property type="component" value="Chromosome 3"/>
</dbReference>
<dbReference type="ExpressionAtlas" id="Q9LFH3">
    <property type="expression patterns" value="baseline and differential"/>
</dbReference>
<dbReference type="GO" id="GO:0005829">
    <property type="term" value="C:cytosol"/>
    <property type="evidence" value="ECO:0000314"/>
    <property type="project" value="TAIR"/>
</dbReference>
<dbReference type="GO" id="GO:0005634">
    <property type="term" value="C:nucleus"/>
    <property type="evidence" value="ECO:0000314"/>
    <property type="project" value="TAIR"/>
</dbReference>
<dbReference type="GO" id="GO:0102682">
    <property type="term" value="F:cytokinin riboside 5'-monophosphate phosphoribohydrolase activity"/>
    <property type="evidence" value="ECO:0007669"/>
    <property type="project" value="RHEA"/>
</dbReference>
<dbReference type="GO" id="GO:0009691">
    <property type="term" value="P:cytokinin biosynthetic process"/>
    <property type="evidence" value="ECO:0007669"/>
    <property type="project" value="UniProtKB-KW"/>
</dbReference>
<dbReference type="FunFam" id="3.40.50.450:FF:000005">
    <property type="entry name" value="CASP-like protein"/>
    <property type="match status" value="1"/>
</dbReference>
<dbReference type="Gene3D" id="3.40.50.450">
    <property type="match status" value="1"/>
</dbReference>
<dbReference type="InterPro" id="IPR005269">
    <property type="entry name" value="LOG"/>
</dbReference>
<dbReference type="InterPro" id="IPR031100">
    <property type="entry name" value="LOG_fam"/>
</dbReference>
<dbReference type="NCBIfam" id="TIGR00730">
    <property type="entry name" value="Rossman fold protein, TIGR00730 family"/>
    <property type="match status" value="1"/>
</dbReference>
<dbReference type="PANTHER" id="PTHR31223:SF74">
    <property type="entry name" value="CYTOKININ RIBOSIDE 5'-MONOPHOSPHATE PHOSPHORIBOHYDROLASE LOG4"/>
    <property type="match status" value="1"/>
</dbReference>
<dbReference type="PANTHER" id="PTHR31223">
    <property type="entry name" value="LOG FAMILY PROTEIN YJL055W"/>
    <property type="match status" value="1"/>
</dbReference>
<dbReference type="Pfam" id="PF03641">
    <property type="entry name" value="Lysine_decarbox"/>
    <property type="match status" value="1"/>
</dbReference>
<dbReference type="SUPFAM" id="SSF102405">
    <property type="entry name" value="MCP/YpsA-like"/>
    <property type="match status" value="1"/>
</dbReference>
<proteinExistence type="evidence at protein level"/>